<reference key="1">
    <citation type="journal article" date="2007" name="PLoS ONE">
        <title>Analysis of the neurotoxin complex genes in Clostridium botulinum A1-A4 and B1 strains: BoNT/A3, /Ba4 and /B1 clusters are located within plasmids.</title>
        <authorList>
            <person name="Smith T.J."/>
            <person name="Hill K.K."/>
            <person name="Foley B.T."/>
            <person name="Detter J.C."/>
            <person name="Munk A.C."/>
            <person name="Bruce D.C."/>
            <person name="Doggett N.A."/>
            <person name="Smith L.A."/>
            <person name="Marks J.D."/>
            <person name="Xie G."/>
            <person name="Brettin T.S."/>
        </authorList>
    </citation>
    <scope>NUCLEOTIDE SEQUENCE [LARGE SCALE GENOMIC DNA]</scope>
    <source>
        <strain>Loch Maree / Type A3</strain>
    </source>
</reference>
<accession>B1KZ37</accession>
<sequence length="344" mass="39109">MKQTKTKYGKMKQMVSNLKLPDYRYEQLTKAIFHQRIDNFDDIHILPKALRMSLVNEFGKNVSSVIPVFSQDSKQARKLLFELTDGERIEAVGLKYKQGWESFCISSQCGCGFGCRFCATGSAGFKRNLTADEITDQLLYFYFNNHRLNSISFMGMGEAFANPELFDAVKILTDQNLFGLSQRRITISTIGIIPGIQRLTKKFPQVNLAFSLHSPFESQRSDLMPINKRFPLNEVMKTLDEHIIHTGRRVFIAYIMLEGINDSKEHAEAVVGLLKNRGSWEHLYHIDLIPYNSTDKTTFKFQSSSAIKQFCSTLKKAGISATVRTQFGSEISAACGQLCYENEL</sequence>
<organism>
    <name type="scientific">Clostridium botulinum (strain Loch Maree / Type A3)</name>
    <dbReference type="NCBI Taxonomy" id="498214"/>
    <lineage>
        <taxon>Bacteria</taxon>
        <taxon>Bacillati</taxon>
        <taxon>Bacillota</taxon>
        <taxon>Clostridia</taxon>
        <taxon>Eubacteriales</taxon>
        <taxon>Clostridiaceae</taxon>
        <taxon>Clostridium</taxon>
    </lineage>
</organism>
<comment type="function">
    <text evidence="1">Specifically methylates position 8 of adenine 2503 in 23S rRNA. Confers resistance to some classes of antibiotics.</text>
</comment>
<comment type="catalytic activity">
    <reaction evidence="1">
        <text>adenosine(2503) in 23S rRNA + 2 reduced [2Fe-2S]-[ferredoxin] + 2 S-adenosyl-L-methionine = 8-methyladenosine(2503) in 23S rRNA + 5'-deoxyadenosine + L-methionine + 2 oxidized [2Fe-2S]-[ferredoxin] + S-adenosyl-L-homocysteine</text>
        <dbReference type="Rhea" id="RHEA:42632"/>
        <dbReference type="Rhea" id="RHEA-COMP:10000"/>
        <dbReference type="Rhea" id="RHEA-COMP:10001"/>
        <dbReference type="Rhea" id="RHEA-COMP:10152"/>
        <dbReference type="Rhea" id="RHEA-COMP:10153"/>
        <dbReference type="ChEBI" id="CHEBI:17319"/>
        <dbReference type="ChEBI" id="CHEBI:33737"/>
        <dbReference type="ChEBI" id="CHEBI:33738"/>
        <dbReference type="ChEBI" id="CHEBI:57844"/>
        <dbReference type="ChEBI" id="CHEBI:57856"/>
        <dbReference type="ChEBI" id="CHEBI:59789"/>
        <dbReference type="ChEBI" id="CHEBI:74411"/>
        <dbReference type="ChEBI" id="CHEBI:74543"/>
        <dbReference type="EC" id="2.1.1.224"/>
    </reaction>
</comment>
<comment type="cofactor">
    <cofactor evidence="1">
        <name>[4Fe-4S] cluster</name>
        <dbReference type="ChEBI" id="CHEBI:49883"/>
    </cofactor>
    <text evidence="1">Binds 1 [4Fe-4S] cluster. The cluster is coordinated with 3 cysteines and an exchangeable S-adenosyl-L-methionine.</text>
</comment>
<comment type="subcellular location">
    <subcellularLocation>
        <location evidence="1">Cytoplasm</location>
    </subcellularLocation>
</comment>
<comment type="miscellaneous">
    <text evidence="1">Reaction proceeds by a ping-pong mechanism involving intermediate methylation of a conserved cysteine residue.</text>
</comment>
<comment type="similarity">
    <text evidence="1">Belongs to the radical SAM superfamily. RlmN family. Cfr subfamily.</text>
</comment>
<gene>
    <name evidence="1" type="primary">cfr</name>
    <name type="ordered locus">CLK_2251</name>
</gene>
<name>CFR_CLOBM</name>
<protein>
    <recommendedName>
        <fullName evidence="1">Ribosomal RNA large subunit methyltransferase Cfr</fullName>
        <ecNumber evidence="1">2.1.1.224</ecNumber>
    </recommendedName>
    <alternativeName>
        <fullName evidence="1">23S rRNA (adenine(2503)-C(8))-methyltransferase</fullName>
    </alternativeName>
    <alternativeName>
        <fullName evidence="1">23S rRNA m8A2503 methyltransferase</fullName>
    </alternativeName>
</protein>
<proteinExistence type="inferred from homology"/>
<dbReference type="EC" id="2.1.1.224" evidence="1"/>
<dbReference type="EMBL" id="CP000962">
    <property type="protein sequence ID" value="ACA53662.1"/>
    <property type="molecule type" value="Genomic_DNA"/>
</dbReference>
<dbReference type="RefSeq" id="WP_012341861.1">
    <property type="nucleotide sequence ID" value="NC_010520.1"/>
</dbReference>
<dbReference type="SMR" id="B1KZ37"/>
<dbReference type="KEGG" id="cbl:CLK_2251"/>
<dbReference type="HOGENOM" id="CLU_029101_0_2_9"/>
<dbReference type="GO" id="GO:0005737">
    <property type="term" value="C:cytoplasm"/>
    <property type="evidence" value="ECO:0007669"/>
    <property type="project" value="UniProtKB-SubCell"/>
</dbReference>
<dbReference type="GO" id="GO:0051539">
    <property type="term" value="F:4 iron, 4 sulfur cluster binding"/>
    <property type="evidence" value="ECO:0007669"/>
    <property type="project" value="UniProtKB-UniRule"/>
</dbReference>
<dbReference type="GO" id="GO:0046872">
    <property type="term" value="F:metal ion binding"/>
    <property type="evidence" value="ECO:0007669"/>
    <property type="project" value="UniProtKB-KW"/>
</dbReference>
<dbReference type="GO" id="GO:0016433">
    <property type="term" value="F:rRNA (adenine) methyltransferase activity"/>
    <property type="evidence" value="ECO:0007669"/>
    <property type="project" value="UniProtKB-UniRule"/>
</dbReference>
<dbReference type="GO" id="GO:0019843">
    <property type="term" value="F:rRNA binding"/>
    <property type="evidence" value="ECO:0007669"/>
    <property type="project" value="UniProtKB-UniRule"/>
</dbReference>
<dbReference type="GO" id="GO:0046677">
    <property type="term" value="P:response to antibiotic"/>
    <property type="evidence" value="ECO:0007669"/>
    <property type="project" value="UniProtKB-KW"/>
</dbReference>
<dbReference type="GO" id="GO:0070475">
    <property type="term" value="P:rRNA base methylation"/>
    <property type="evidence" value="ECO:0007669"/>
    <property type="project" value="UniProtKB-UniRule"/>
</dbReference>
<dbReference type="GO" id="GO:0030488">
    <property type="term" value="P:tRNA methylation"/>
    <property type="evidence" value="ECO:0007669"/>
    <property type="project" value="TreeGrafter"/>
</dbReference>
<dbReference type="CDD" id="cd01335">
    <property type="entry name" value="Radical_SAM"/>
    <property type="match status" value="1"/>
</dbReference>
<dbReference type="FunFam" id="3.20.20.70:FF:000014">
    <property type="entry name" value="Probable dual-specificity RNA methyltransferase RlmN"/>
    <property type="match status" value="1"/>
</dbReference>
<dbReference type="Gene3D" id="1.10.150.530">
    <property type="match status" value="1"/>
</dbReference>
<dbReference type="Gene3D" id="3.20.20.70">
    <property type="entry name" value="Aldolase class I"/>
    <property type="match status" value="1"/>
</dbReference>
<dbReference type="HAMAP" id="MF_01873">
    <property type="entry name" value="23SrRNA_methyltr_Cfr"/>
    <property type="match status" value="1"/>
</dbReference>
<dbReference type="InterPro" id="IPR013785">
    <property type="entry name" value="Aldolase_TIM"/>
</dbReference>
<dbReference type="InterPro" id="IPR040072">
    <property type="entry name" value="Methyltransferase_A"/>
</dbReference>
<dbReference type="InterPro" id="IPR022881">
    <property type="entry name" value="rRNA_lsu_MeTfrase_Cfr"/>
</dbReference>
<dbReference type="InterPro" id="IPR004383">
    <property type="entry name" value="rRNA_lsu_MTrfase_RlmN/Cfr"/>
</dbReference>
<dbReference type="InterPro" id="IPR007197">
    <property type="entry name" value="rSAM"/>
</dbReference>
<dbReference type="NCBIfam" id="NF000424">
    <property type="entry name" value="CfrAB"/>
    <property type="match status" value="1"/>
</dbReference>
<dbReference type="NCBIfam" id="NF011024">
    <property type="entry name" value="PRK14453.1"/>
    <property type="match status" value="1"/>
</dbReference>
<dbReference type="NCBIfam" id="TIGR04432">
    <property type="entry name" value="rSAM_Cfr"/>
    <property type="match status" value="1"/>
</dbReference>
<dbReference type="PANTHER" id="PTHR30544">
    <property type="entry name" value="23S RRNA METHYLTRANSFERASE"/>
    <property type="match status" value="1"/>
</dbReference>
<dbReference type="PANTHER" id="PTHR30544:SF5">
    <property type="entry name" value="RADICAL SAM CORE DOMAIN-CONTAINING PROTEIN"/>
    <property type="match status" value="1"/>
</dbReference>
<dbReference type="Pfam" id="PF04055">
    <property type="entry name" value="Radical_SAM"/>
    <property type="match status" value="1"/>
</dbReference>
<dbReference type="PIRSF" id="PIRSF006004">
    <property type="entry name" value="CHP00048"/>
    <property type="match status" value="1"/>
</dbReference>
<dbReference type="SFLD" id="SFLDF00275">
    <property type="entry name" value="adenosine_C2_methyltransferase"/>
    <property type="match status" value="1"/>
</dbReference>
<dbReference type="SFLD" id="SFLDF00296">
    <property type="entry name" value="adenosine_C8_methyltransferase"/>
    <property type="match status" value="1"/>
</dbReference>
<dbReference type="SFLD" id="SFLDG01062">
    <property type="entry name" value="methyltransferase_(Class_A)"/>
    <property type="match status" value="1"/>
</dbReference>
<dbReference type="SUPFAM" id="SSF102114">
    <property type="entry name" value="Radical SAM enzymes"/>
    <property type="match status" value="1"/>
</dbReference>
<dbReference type="PROSITE" id="PS51918">
    <property type="entry name" value="RADICAL_SAM"/>
    <property type="match status" value="1"/>
</dbReference>
<feature type="chain" id="PRO_0000350121" description="Ribosomal RNA large subunit methyltransferase Cfr">
    <location>
        <begin position="1"/>
        <end position="344"/>
    </location>
</feature>
<feature type="domain" description="Radical SAM core" evidence="2">
    <location>
        <begin position="97"/>
        <end position="330"/>
    </location>
</feature>
<feature type="active site" description="Proton acceptor" evidence="1">
    <location>
        <position position="90"/>
    </location>
</feature>
<feature type="active site" description="S-methylcysteine intermediate" evidence="1">
    <location>
        <position position="335"/>
    </location>
</feature>
<feature type="binding site" evidence="1">
    <location>
        <position position="111"/>
    </location>
    <ligand>
        <name>[4Fe-4S] cluster</name>
        <dbReference type="ChEBI" id="CHEBI:49883"/>
        <note>4Fe-4S-S-AdoMet</note>
    </ligand>
</feature>
<feature type="binding site" evidence="1">
    <location>
        <position position="115"/>
    </location>
    <ligand>
        <name>[4Fe-4S] cluster</name>
        <dbReference type="ChEBI" id="CHEBI:49883"/>
        <note>4Fe-4S-S-AdoMet</note>
    </ligand>
</feature>
<feature type="binding site" evidence="1">
    <location>
        <position position="118"/>
    </location>
    <ligand>
        <name>[4Fe-4S] cluster</name>
        <dbReference type="ChEBI" id="CHEBI:49883"/>
        <note>4Fe-4S-S-AdoMet</note>
    </ligand>
</feature>
<feature type="binding site" evidence="1">
    <location>
        <begin position="157"/>
        <end position="158"/>
    </location>
    <ligand>
        <name>S-adenosyl-L-methionine</name>
        <dbReference type="ChEBI" id="CHEBI:59789"/>
    </ligand>
</feature>
<feature type="binding site" evidence="1">
    <location>
        <position position="188"/>
    </location>
    <ligand>
        <name>S-adenosyl-L-methionine</name>
        <dbReference type="ChEBI" id="CHEBI:59789"/>
    </ligand>
</feature>
<feature type="binding site" evidence="1">
    <location>
        <begin position="211"/>
        <end position="213"/>
    </location>
    <ligand>
        <name>S-adenosyl-L-methionine</name>
        <dbReference type="ChEBI" id="CHEBI:59789"/>
    </ligand>
</feature>
<feature type="binding site" evidence="1">
    <location>
        <position position="292"/>
    </location>
    <ligand>
        <name>S-adenosyl-L-methionine</name>
        <dbReference type="ChEBI" id="CHEBI:59789"/>
    </ligand>
</feature>
<feature type="disulfide bond" description="(transient)" evidence="1">
    <location>
        <begin position="104"/>
        <end position="335"/>
    </location>
</feature>
<keyword id="KW-0004">4Fe-4S</keyword>
<keyword id="KW-0046">Antibiotic resistance</keyword>
<keyword id="KW-0963">Cytoplasm</keyword>
<keyword id="KW-1015">Disulfide bond</keyword>
<keyword id="KW-0408">Iron</keyword>
<keyword id="KW-0411">Iron-sulfur</keyword>
<keyword id="KW-0479">Metal-binding</keyword>
<keyword id="KW-0489">Methyltransferase</keyword>
<keyword id="KW-0698">rRNA processing</keyword>
<keyword id="KW-0949">S-adenosyl-L-methionine</keyword>
<keyword id="KW-0808">Transferase</keyword>
<evidence type="ECO:0000255" key="1">
    <source>
        <dbReference type="HAMAP-Rule" id="MF_01873"/>
    </source>
</evidence>
<evidence type="ECO:0000255" key="2">
    <source>
        <dbReference type="PROSITE-ProRule" id="PRU01266"/>
    </source>
</evidence>